<feature type="chain" id="PRO_0000301122" description="Peptide deformylase">
    <location>
        <begin position="1"/>
        <end position="169"/>
    </location>
</feature>
<feature type="active site" evidence="1">
    <location>
        <position position="134"/>
    </location>
</feature>
<feature type="binding site" evidence="1">
    <location>
        <position position="91"/>
    </location>
    <ligand>
        <name>Fe cation</name>
        <dbReference type="ChEBI" id="CHEBI:24875"/>
    </ligand>
</feature>
<feature type="binding site" evidence="1">
    <location>
        <position position="133"/>
    </location>
    <ligand>
        <name>Fe cation</name>
        <dbReference type="ChEBI" id="CHEBI:24875"/>
    </ligand>
</feature>
<feature type="binding site" evidence="1">
    <location>
        <position position="137"/>
    </location>
    <ligand>
        <name>Fe cation</name>
        <dbReference type="ChEBI" id="CHEBI:24875"/>
    </ligand>
</feature>
<accession>Q31J84</accession>
<evidence type="ECO:0000255" key="1">
    <source>
        <dbReference type="HAMAP-Rule" id="MF_00163"/>
    </source>
</evidence>
<name>DEF_HYDCU</name>
<gene>
    <name evidence="1" type="primary">def</name>
    <name type="ordered locus">Tcr_0193</name>
</gene>
<organism>
    <name type="scientific">Hydrogenovibrio crunogenus (strain DSM 25203 / XCL-2)</name>
    <name type="common">Thiomicrospira crunogena</name>
    <dbReference type="NCBI Taxonomy" id="317025"/>
    <lineage>
        <taxon>Bacteria</taxon>
        <taxon>Pseudomonadati</taxon>
        <taxon>Pseudomonadota</taxon>
        <taxon>Gammaproteobacteria</taxon>
        <taxon>Thiotrichales</taxon>
        <taxon>Piscirickettsiaceae</taxon>
        <taxon>Hydrogenovibrio</taxon>
    </lineage>
</organism>
<protein>
    <recommendedName>
        <fullName evidence="1">Peptide deformylase</fullName>
        <shortName evidence="1">PDF</shortName>
        <ecNumber evidence="1">3.5.1.88</ecNumber>
    </recommendedName>
    <alternativeName>
        <fullName evidence="1">Polypeptide deformylase</fullName>
    </alternativeName>
</protein>
<dbReference type="EC" id="3.5.1.88" evidence="1"/>
<dbReference type="EMBL" id="CP000109">
    <property type="protein sequence ID" value="ABB40789.1"/>
    <property type="molecule type" value="Genomic_DNA"/>
</dbReference>
<dbReference type="SMR" id="Q31J84"/>
<dbReference type="STRING" id="317025.Tcr_0193"/>
<dbReference type="KEGG" id="tcx:Tcr_0193"/>
<dbReference type="eggNOG" id="COG0242">
    <property type="taxonomic scope" value="Bacteria"/>
</dbReference>
<dbReference type="HOGENOM" id="CLU_061901_2_1_6"/>
<dbReference type="OrthoDB" id="9804313at2"/>
<dbReference type="GO" id="GO:0046872">
    <property type="term" value="F:metal ion binding"/>
    <property type="evidence" value="ECO:0007669"/>
    <property type="project" value="UniProtKB-KW"/>
</dbReference>
<dbReference type="GO" id="GO:0042586">
    <property type="term" value="F:peptide deformylase activity"/>
    <property type="evidence" value="ECO:0007669"/>
    <property type="project" value="UniProtKB-UniRule"/>
</dbReference>
<dbReference type="GO" id="GO:0043686">
    <property type="term" value="P:co-translational protein modification"/>
    <property type="evidence" value="ECO:0007669"/>
    <property type="project" value="TreeGrafter"/>
</dbReference>
<dbReference type="GO" id="GO:0006412">
    <property type="term" value="P:translation"/>
    <property type="evidence" value="ECO:0007669"/>
    <property type="project" value="UniProtKB-UniRule"/>
</dbReference>
<dbReference type="CDD" id="cd00487">
    <property type="entry name" value="Pep_deformylase"/>
    <property type="match status" value="1"/>
</dbReference>
<dbReference type="Gene3D" id="3.90.45.10">
    <property type="entry name" value="Peptide deformylase"/>
    <property type="match status" value="1"/>
</dbReference>
<dbReference type="HAMAP" id="MF_00163">
    <property type="entry name" value="Pep_deformylase"/>
    <property type="match status" value="1"/>
</dbReference>
<dbReference type="InterPro" id="IPR023635">
    <property type="entry name" value="Peptide_deformylase"/>
</dbReference>
<dbReference type="InterPro" id="IPR036821">
    <property type="entry name" value="Peptide_deformylase_sf"/>
</dbReference>
<dbReference type="NCBIfam" id="TIGR00079">
    <property type="entry name" value="pept_deformyl"/>
    <property type="match status" value="1"/>
</dbReference>
<dbReference type="NCBIfam" id="NF001159">
    <property type="entry name" value="PRK00150.1-3"/>
    <property type="match status" value="1"/>
</dbReference>
<dbReference type="PANTHER" id="PTHR10458">
    <property type="entry name" value="PEPTIDE DEFORMYLASE"/>
    <property type="match status" value="1"/>
</dbReference>
<dbReference type="PANTHER" id="PTHR10458:SF22">
    <property type="entry name" value="PEPTIDE DEFORMYLASE"/>
    <property type="match status" value="1"/>
</dbReference>
<dbReference type="Pfam" id="PF01327">
    <property type="entry name" value="Pep_deformylase"/>
    <property type="match status" value="1"/>
</dbReference>
<dbReference type="PIRSF" id="PIRSF004749">
    <property type="entry name" value="Pep_def"/>
    <property type="match status" value="1"/>
</dbReference>
<dbReference type="PRINTS" id="PR01576">
    <property type="entry name" value="PDEFORMYLASE"/>
</dbReference>
<dbReference type="SUPFAM" id="SSF56420">
    <property type="entry name" value="Peptide deformylase"/>
    <property type="match status" value="1"/>
</dbReference>
<keyword id="KW-0378">Hydrolase</keyword>
<keyword id="KW-0408">Iron</keyword>
<keyword id="KW-0479">Metal-binding</keyword>
<keyword id="KW-0648">Protein biosynthesis</keyword>
<sequence length="169" mass="19010">MDKLDIVLYPDEGLREVCKPVPEMTDELDKLIDEMFYTMYDAPGIGLAAPQVAVQQRLIVVDISETKDEPIALLNPEIIKTAGKITWEEGCLSIPGIYAKVDRPSDILVRGMDRDGKTIEFEANELLAVCIQHEIDHLNGKLFIDHLSGLKRTRAIQKFKKEMAEQANS</sequence>
<reference key="1">
    <citation type="journal article" date="2006" name="PLoS Biol.">
        <title>The genome of deep-sea vent chemolithoautotroph Thiomicrospira crunogena XCL-2.</title>
        <authorList>
            <person name="Scott K.M."/>
            <person name="Sievert S.M."/>
            <person name="Abril F.N."/>
            <person name="Ball L.A."/>
            <person name="Barrett C.J."/>
            <person name="Blake R.A."/>
            <person name="Boller A.J."/>
            <person name="Chain P.S.G."/>
            <person name="Clark J.A."/>
            <person name="Davis C.R."/>
            <person name="Detter C."/>
            <person name="Do K.F."/>
            <person name="Dobrinski K.P."/>
            <person name="Faza B.I."/>
            <person name="Fitzpatrick K.A."/>
            <person name="Freyermuth S.K."/>
            <person name="Harmer T.L."/>
            <person name="Hauser L.J."/>
            <person name="Huegler M."/>
            <person name="Kerfeld C.A."/>
            <person name="Klotz M.G."/>
            <person name="Kong W.W."/>
            <person name="Land M."/>
            <person name="Lapidus A."/>
            <person name="Larimer F.W."/>
            <person name="Longo D.L."/>
            <person name="Lucas S."/>
            <person name="Malfatti S.A."/>
            <person name="Massey S.E."/>
            <person name="Martin D.D."/>
            <person name="McCuddin Z."/>
            <person name="Meyer F."/>
            <person name="Moore J.L."/>
            <person name="Ocampo L.H. Jr."/>
            <person name="Paul J.H."/>
            <person name="Paulsen I.T."/>
            <person name="Reep D.K."/>
            <person name="Ren Q."/>
            <person name="Ross R.L."/>
            <person name="Sato P.Y."/>
            <person name="Thomas P."/>
            <person name="Tinkham L.E."/>
            <person name="Zeruth G.T."/>
        </authorList>
    </citation>
    <scope>NUCLEOTIDE SEQUENCE [LARGE SCALE GENOMIC DNA]</scope>
    <source>
        <strain>DSM 25203 / XCL-2</strain>
    </source>
</reference>
<comment type="function">
    <text evidence="1">Removes the formyl group from the N-terminal Met of newly synthesized proteins. Requires at least a dipeptide for an efficient rate of reaction. N-terminal L-methionine is a prerequisite for activity but the enzyme has broad specificity at other positions.</text>
</comment>
<comment type="catalytic activity">
    <reaction evidence="1">
        <text>N-terminal N-formyl-L-methionyl-[peptide] + H2O = N-terminal L-methionyl-[peptide] + formate</text>
        <dbReference type="Rhea" id="RHEA:24420"/>
        <dbReference type="Rhea" id="RHEA-COMP:10639"/>
        <dbReference type="Rhea" id="RHEA-COMP:10640"/>
        <dbReference type="ChEBI" id="CHEBI:15377"/>
        <dbReference type="ChEBI" id="CHEBI:15740"/>
        <dbReference type="ChEBI" id="CHEBI:49298"/>
        <dbReference type="ChEBI" id="CHEBI:64731"/>
        <dbReference type="EC" id="3.5.1.88"/>
    </reaction>
</comment>
<comment type="cofactor">
    <cofactor evidence="1">
        <name>Fe(2+)</name>
        <dbReference type="ChEBI" id="CHEBI:29033"/>
    </cofactor>
    <text evidence="1">Binds 1 Fe(2+) ion.</text>
</comment>
<comment type="similarity">
    <text evidence="1">Belongs to the polypeptide deformylase family.</text>
</comment>
<proteinExistence type="inferred from homology"/>